<protein>
    <recommendedName>
        <fullName>Probable cytochrome P450 6a20</fullName>
        <ecNumber>1.14.-.-</ecNumber>
    </recommendedName>
    <alternativeName>
        <fullName>CYPVIA20</fullName>
    </alternativeName>
</protein>
<reference key="1">
    <citation type="journal article" date="2000" name="Science">
        <title>The genome sequence of Drosophila melanogaster.</title>
        <authorList>
            <person name="Adams M.D."/>
            <person name="Celniker S.E."/>
            <person name="Holt R.A."/>
            <person name="Evans C.A."/>
            <person name="Gocayne J.D."/>
            <person name="Amanatides P.G."/>
            <person name="Scherer S.E."/>
            <person name="Li P.W."/>
            <person name="Hoskins R.A."/>
            <person name="Galle R.F."/>
            <person name="George R.A."/>
            <person name="Lewis S.E."/>
            <person name="Richards S."/>
            <person name="Ashburner M."/>
            <person name="Henderson S.N."/>
            <person name="Sutton G.G."/>
            <person name="Wortman J.R."/>
            <person name="Yandell M.D."/>
            <person name="Zhang Q."/>
            <person name="Chen L.X."/>
            <person name="Brandon R.C."/>
            <person name="Rogers Y.-H.C."/>
            <person name="Blazej R.G."/>
            <person name="Champe M."/>
            <person name="Pfeiffer B.D."/>
            <person name="Wan K.H."/>
            <person name="Doyle C."/>
            <person name="Baxter E.G."/>
            <person name="Helt G."/>
            <person name="Nelson C.R."/>
            <person name="Miklos G.L.G."/>
            <person name="Abril J.F."/>
            <person name="Agbayani A."/>
            <person name="An H.-J."/>
            <person name="Andrews-Pfannkoch C."/>
            <person name="Baldwin D."/>
            <person name="Ballew R.M."/>
            <person name="Basu A."/>
            <person name="Baxendale J."/>
            <person name="Bayraktaroglu L."/>
            <person name="Beasley E.M."/>
            <person name="Beeson K.Y."/>
            <person name="Benos P.V."/>
            <person name="Berman B.P."/>
            <person name="Bhandari D."/>
            <person name="Bolshakov S."/>
            <person name="Borkova D."/>
            <person name="Botchan M.R."/>
            <person name="Bouck J."/>
            <person name="Brokstein P."/>
            <person name="Brottier P."/>
            <person name="Burtis K.C."/>
            <person name="Busam D.A."/>
            <person name="Butler H."/>
            <person name="Cadieu E."/>
            <person name="Center A."/>
            <person name="Chandra I."/>
            <person name="Cherry J.M."/>
            <person name="Cawley S."/>
            <person name="Dahlke C."/>
            <person name="Davenport L.B."/>
            <person name="Davies P."/>
            <person name="de Pablos B."/>
            <person name="Delcher A."/>
            <person name="Deng Z."/>
            <person name="Mays A.D."/>
            <person name="Dew I."/>
            <person name="Dietz S.M."/>
            <person name="Dodson K."/>
            <person name="Doup L.E."/>
            <person name="Downes M."/>
            <person name="Dugan-Rocha S."/>
            <person name="Dunkov B.C."/>
            <person name="Dunn P."/>
            <person name="Durbin K.J."/>
            <person name="Evangelista C.C."/>
            <person name="Ferraz C."/>
            <person name="Ferriera S."/>
            <person name="Fleischmann W."/>
            <person name="Fosler C."/>
            <person name="Gabrielian A.E."/>
            <person name="Garg N.S."/>
            <person name="Gelbart W.M."/>
            <person name="Glasser K."/>
            <person name="Glodek A."/>
            <person name="Gong F."/>
            <person name="Gorrell J.H."/>
            <person name="Gu Z."/>
            <person name="Guan P."/>
            <person name="Harris M."/>
            <person name="Harris N.L."/>
            <person name="Harvey D.A."/>
            <person name="Heiman T.J."/>
            <person name="Hernandez J.R."/>
            <person name="Houck J."/>
            <person name="Hostin D."/>
            <person name="Houston K.A."/>
            <person name="Howland T.J."/>
            <person name="Wei M.-H."/>
            <person name="Ibegwam C."/>
            <person name="Jalali M."/>
            <person name="Kalush F."/>
            <person name="Karpen G.H."/>
            <person name="Ke Z."/>
            <person name="Kennison J.A."/>
            <person name="Ketchum K.A."/>
            <person name="Kimmel B.E."/>
            <person name="Kodira C.D."/>
            <person name="Kraft C.L."/>
            <person name="Kravitz S."/>
            <person name="Kulp D."/>
            <person name="Lai Z."/>
            <person name="Lasko P."/>
            <person name="Lei Y."/>
            <person name="Levitsky A.A."/>
            <person name="Li J.H."/>
            <person name="Li Z."/>
            <person name="Liang Y."/>
            <person name="Lin X."/>
            <person name="Liu X."/>
            <person name="Mattei B."/>
            <person name="McIntosh T.C."/>
            <person name="McLeod M.P."/>
            <person name="McPherson D."/>
            <person name="Merkulov G."/>
            <person name="Milshina N.V."/>
            <person name="Mobarry C."/>
            <person name="Morris J."/>
            <person name="Moshrefi A."/>
            <person name="Mount S.M."/>
            <person name="Moy M."/>
            <person name="Murphy B."/>
            <person name="Murphy L."/>
            <person name="Muzny D.M."/>
            <person name="Nelson D.L."/>
            <person name="Nelson D.R."/>
            <person name="Nelson K.A."/>
            <person name="Nixon K."/>
            <person name="Nusskern D.R."/>
            <person name="Pacleb J.M."/>
            <person name="Palazzolo M."/>
            <person name="Pittman G.S."/>
            <person name="Pan S."/>
            <person name="Pollard J."/>
            <person name="Puri V."/>
            <person name="Reese M.G."/>
            <person name="Reinert K."/>
            <person name="Remington K."/>
            <person name="Saunders R.D.C."/>
            <person name="Scheeler F."/>
            <person name="Shen H."/>
            <person name="Shue B.C."/>
            <person name="Siden-Kiamos I."/>
            <person name="Simpson M."/>
            <person name="Skupski M.P."/>
            <person name="Smith T.J."/>
            <person name="Spier E."/>
            <person name="Spradling A.C."/>
            <person name="Stapleton M."/>
            <person name="Strong R."/>
            <person name="Sun E."/>
            <person name="Svirskas R."/>
            <person name="Tector C."/>
            <person name="Turner R."/>
            <person name="Venter E."/>
            <person name="Wang A.H."/>
            <person name="Wang X."/>
            <person name="Wang Z.-Y."/>
            <person name="Wassarman D.A."/>
            <person name="Weinstock G.M."/>
            <person name="Weissenbach J."/>
            <person name="Williams S.M."/>
            <person name="Woodage T."/>
            <person name="Worley K.C."/>
            <person name="Wu D."/>
            <person name="Yang S."/>
            <person name="Yao Q.A."/>
            <person name="Ye J."/>
            <person name="Yeh R.-F."/>
            <person name="Zaveri J.S."/>
            <person name="Zhan M."/>
            <person name="Zhang G."/>
            <person name="Zhao Q."/>
            <person name="Zheng L."/>
            <person name="Zheng X.H."/>
            <person name="Zhong F.N."/>
            <person name="Zhong W."/>
            <person name="Zhou X."/>
            <person name="Zhu S.C."/>
            <person name="Zhu X."/>
            <person name="Smith H.O."/>
            <person name="Gibbs R.A."/>
            <person name="Myers E.W."/>
            <person name="Rubin G.M."/>
            <person name="Venter J.C."/>
        </authorList>
    </citation>
    <scope>NUCLEOTIDE SEQUENCE [LARGE SCALE GENOMIC DNA]</scope>
    <source>
        <strain>Berkeley</strain>
    </source>
</reference>
<reference key="2">
    <citation type="journal article" date="2002" name="Genome Biol.">
        <title>Annotation of the Drosophila melanogaster euchromatic genome: a systematic review.</title>
        <authorList>
            <person name="Misra S."/>
            <person name="Crosby M.A."/>
            <person name="Mungall C.J."/>
            <person name="Matthews B.B."/>
            <person name="Campbell K.S."/>
            <person name="Hradecky P."/>
            <person name="Huang Y."/>
            <person name="Kaminker J.S."/>
            <person name="Millburn G.H."/>
            <person name="Prochnik S.E."/>
            <person name="Smith C.D."/>
            <person name="Tupy J.L."/>
            <person name="Whitfield E.J."/>
            <person name="Bayraktaroglu L."/>
            <person name="Berman B.P."/>
            <person name="Bettencourt B.R."/>
            <person name="Celniker S.E."/>
            <person name="de Grey A.D.N.J."/>
            <person name="Drysdale R.A."/>
            <person name="Harris N.L."/>
            <person name="Richter J."/>
            <person name="Russo S."/>
            <person name="Schroeder A.J."/>
            <person name="Shu S.Q."/>
            <person name="Stapleton M."/>
            <person name="Yamada C."/>
            <person name="Ashburner M."/>
            <person name="Gelbart W.M."/>
            <person name="Rubin G.M."/>
            <person name="Lewis S.E."/>
        </authorList>
    </citation>
    <scope>GENOME REANNOTATION</scope>
    <source>
        <strain>Berkeley</strain>
    </source>
</reference>
<reference key="3">
    <citation type="journal article" date="2002" name="Genome Biol.">
        <title>A Drosophila full-length cDNA resource.</title>
        <authorList>
            <person name="Stapleton M."/>
            <person name="Carlson J.W."/>
            <person name="Brokstein P."/>
            <person name="Yu C."/>
            <person name="Champe M."/>
            <person name="George R.A."/>
            <person name="Guarin H."/>
            <person name="Kronmiller B."/>
            <person name="Pacleb J.M."/>
            <person name="Park S."/>
            <person name="Wan K.H."/>
            <person name="Rubin G.M."/>
            <person name="Celniker S.E."/>
        </authorList>
    </citation>
    <scope>NUCLEOTIDE SEQUENCE [LARGE SCALE MRNA] OF 4-501</scope>
    <source>
        <strain>Berkeley</strain>
        <tissue>Embryo</tissue>
    </source>
</reference>
<reference key="4">
    <citation type="submission" date="2008-09" db="EMBL/GenBank/DDBJ databases">
        <authorList>
            <person name="Carlson J.W."/>
            <person name="Booth B."/>
            <person name="Frise E."/>
            <person name="Park S."/>
            <person name="Wan K.H."/>
            <person name="Yu C."/>
            <person name="Celniker S.E."/>
        </authorList>
    </citation>
    <scope>NUCLEOTIDE SEQUENCE [LARGE SCALE MRNA] OF 4-501</scope>
    <source>
        <strain>Berkeley</strain>
        <tissue>Embryo</tissue>
    </source>
</reference>
<sequence>MAVMIVLLIGVITFVAWYVHQHFNYWKRRGIPHDEPKIPYGNTSELMKTVHFADIFKRTYNKLRNKTDGPFVGFYMYFKRMVVVTDIDFAKTVLIREFDKFHDRGVFHNERDDPLSANLVNIDGQKWKTLRQKLTPTFTSGKMKTMFPTILTVGDELIRVFGETASADSDSMEITNVVARFTADVIGSCAFGLDCHSLSDPKAKFVQMGTTAITERRHGKSMDLLLFGAPELAAKLRMKATVQEVEDFYMNIIRDTVDYRVKNNVKRHDFVDMLIEMKLKFDNGDKENGLTFNEIAAQAFIFFLAGFETSSTTMGFALYELACHQDIQDKLRTEINTVLKQHNGKLDYDSMREMTYLEKVIDETMRKRPVVGHLIRVATQHYQHTNPKYNIEKGTGVIVPTLAIHHDPEFYPEPEKFIPERFDEDQVQQRPACTFLPFGDGPRNCIGLRFGRMQVIVGMALLIHNFKFEFHPTKTVVPLEYRTDDFLLSSKGGIHLKVTRV</sequence>
<gene>
    <name type="primary">Cyp6a20</name>
    <name type="ORF">CG10245</name>
</gene>
<comment type="function">
    <text evidence="1">May be involved in the metabolism of insect hormones and in the breakdown of synthetic insecticides.</text>
</comment>
<comment type="cofactor">
    <cofactor evidence="1">
        <name>heme</name>
        <dbReference type="ChEBI" id="CHEBI:30413"/>
    </cofactor>
</comment>
<comment type="subcellular location">
    <subcellularLocation>
        <location evidence="2">Endoplasmic reticulum membrane</location>
        <topology evidence="2">Peripheral membrane protein</topology>
    </subcellularLocation>
    <subcellularLocation>
        <location evidence="2">Microsome membrane</location>
        <topology evidence="2">Peripheral membrane protein</topology>
    </subcellularLocation>
</comment>
<comment type="similarity">
    <text evidence="2">Belongs to the cytochrome P450 family.</text>
</comment>
<name>C6A20_DROME</name>
<keyword id="KW-0256">Endoplasmic reticulum</keyword>
<keyword id="KW-0349">Heme</keyword>
<keyword id="KW-0408">Iron</keyword>
<keyword id="KW-0472">Membrane</keyword>
<keyword id="KW-0479">Metal-binding</keyword>
<keyword id="KW-0492">Microsome</keyword>
<keyword id="KW-0503">Monooxygenase</keyword>
<keyword id="KW-0560">Oxidoreductase</keyword>
<keyword id="KW-1185">Reference proteome</keyword>
<organism>
    <name type="scientific">Drosophila melanogaster</name>
    <name type="common">Fruit fly</name>
    <dbReference type="NCBI Taxonomy" id="7227"/>
    <lineage>
        <taxon>Eukaryota</taxon>
        <taxon>Metazoa</taxon>
        <taxon>Ecdysozoa</taxon>
        <taxon>Arthropoda</taxon>
        <taxon>Hexapoda</taxon>
        <taxon>Insecta</taxon>
        <taxon>Pterygota</taxon>
        <taxon>Neoptera</taxon>
        <taxon>Endopterygota</taxon>
        <taxon>Diptera</taxon>
        <taxon>Brachycera</taxon>
        <taxon>Muscomorpha</taxon>
        <taxon>Ephydroidea</taxon>
        <taxon>Drosophilidae</taxon>
        <taxon>Drosophila</taxon>
        <taxon>Sophophora</taxon>
    </lineage>
</organism>
<evidence type="ECO:0000250" key="1"/>
<evidence type="ECO:0000305" key="2"/>
<accession>Q9V773</accession>
<accession>B5RJG1</accession>
<accession>Q95R69</accession>
<proteinExistence type="evidence at transcript level"/>
<feature type="chain" id="PRO_0000051874" description="Probable cytochrome P450 6a20">
    <location>
        <begin position="1"/>
        <end position="501"/>
    </location>
</feature>
<feature type="binding site" description="axial binding residue" evidence="1">
    <location>
        <position position="445"/>
    </location>
    <ligand>
        <name>heme</name>
        <dbReference type="ChEBI" id="CHEBI:30413"/>
    </ligand>
    <ligandPart>
        <name>Fe</name>
        <dbReference type="ChEBI" id="CHEBI:18248"/>
    </ligandPart>
</feature>
<feature type="sequence conflict" description="In Ref. 3; AAL29138 and 4; ACH92500." evidence="2" ref="3 4">
    <original>M</original>
    <variation>L</variation>
    <location>
        <position position="4"/>
    </location>
</feature>
<feature type="sequence conflict" description="In Ref. 3; AAL29138 and 4; ACH92500." evidence="2" ref="3 4">
    <original>LR</original>
    <variation>YK</variation>
    <location>
        <begin position="63"/>
        <end position="64"/>
    </location>
</feature>
<feature type="sequence conflict" description="In Ref. 3; AAL29138." evidence="2" ref="3">
    <original>T</original>
    <variation>N</variation>
    <location>
        <position position="145"/>
    </location>
</feature>
<dbReference type="EC" id="1.14.-.-"/>
<dbReference type="EMBL" id="AE013599">
    <property type="protein sequence ID" value="AAF58187.2"/>
    <property type="molecule type" value="Genomic_DNA"/>
</dbReference>
<dbReference type="EMBL" id="AY061590">
    <property type="protein sequence ID" value="AAL29138.2"/>
    <property type="molecule type" value="mRNA"/>
</dbReference>
<dbReference type="EMBL" id="BT044435">
    <property type="protein sequence ID" value="ACH92500.1"/>
    <property type="molecule type" value="mRNA"/>
</dbReference>
<dbReference type="RefSeq" id="NP_611002.3">
    <property type="nucleotide sequence ID" value="NM_137158.4"/>
</dbReference>
<dbReference type="SMR" id="Q9V773"/>
<dbReference type="BioGRID" id="62406">
    <property type="interactions" value="1"/>
</dbReference>
<dbReference type="FunCoup" id="Q9V773">
    <property type="interactions" value="98"/>
</dbReference>
<dbReference type="IntAct" id="Q9V773">
    <property type="interactions" value="1"/>
</dbReference>
<dbReference type="STRING" id="7227.FBpp0289404"/>
<dbReference type="PaxDb" id="7227-FBpp0289404"/>
<dbReference type="EnsemblMetazoa" id="FBtr0300127">
    <property type="protein sequence ID" value="FBpp0289404"/>
    <property type="gene ID" value="FBgn0033980"/>
</dbReference>
<dbReference type="GeneID" id="36664"/>
<dbReference type="KEGG" id="dme:Dmel_CG10245"/>
<dbReference type="UCSC" id="CG10245-RB">
    <property type="organism name" value="d. melanogaster"/>
</dbReference>
<dbReference type="AGR" id="FB:FBgn0033980"/>
<dbReference type="CTD" id="36664"/>
<dbReference type="FlyBase" id="FBgn0033980">
    <property type="gene designation" value="Cyp6a20"/>
</dbReference>
<dbReference type="VEuPathDB" id="VectorBase:FBgn0033980"/>
<dbReference type="eggNOG" id="KOG0158">
    <property type="taxonomic scope" value="Eukaryota"/>
</dbReference>
<dbReference type="HOGENOM" id="CLU_544664_0_0_1"/>
<dbReference type="InParanoid" id="Q9V773"/>
<dbReference type="OMA" id="WWVHQNF"/>
<dbReference type="OrthoDB" id="2789670at2759"/>
<dbReference type="PhylomeDB" id="Q9V773"/>
<dbReference type="BioGRID-ORCS" id="36664">
    <property type="hits" value="0 hits in 3 CRISPR screens"/>
</dbReference>
<dbReference type="GenomeRNAi" id="36664"/>
<dbReference type="PRO" id="PR:Q9V773"/>
<dbReference type="Proteomes" id="UP000000803">
    <property type="component" value="Chromosome 2R"/>
</dbReference>
<dbReference type="Bgee" id="FBgn0033980">
    <property type="expression patterns" value="Expressed in peripheral glial cell (Drosophila) in imaginal disc-derived wing and 119 other cell types or tissues"/>
</dbReference>
<dbReference type="GO" id="GO:0005789">
    <property type="term" value="C:endoplasmic reticulum membrane"/>
    <property type="evidence" value="ECO:0007669"/>
    <property type="project" value="UniProtKB-SubCell"/>
</dbReference>
<dbReference type="GO" id="GO:0020037">
    <property type="term" value="F:heme binding"/>
    <property type="evidence" value="ECO:0007669"/>
    <property type="project" value="InterPro"/>
</dbReference>
<dbReference type="GO" id="GO:0005506">
    <property type="term" value="F:iron ion binding"/>
    <property type="evidence" value="ECO:0007669"/>
    <property type="project" value="InterPro"/>
</dbReference>
<dbReference type="GO" id="GO:0004497">
    <property type="term" value="F:monooxygenase activity"/>
    <property type="evidence" value="ECO:0007669"/>
    <property type="project" value="UniProtKB-KW"/>
</dbReference>
<dbReference type="GO" id="GO:0016705">
    <property type="term" value="F:oxidoreductase activity, acting on paired donors, with incorporation or reduction of molecular oxygen"/>
    <property type="evidence" value="ECO:0007669"/>
    <property type="project" value="InterPro"/>
</dbReference>
<dbReference type="GO" id="GO:0002118">
    <property type="term" value="P:aggressive behavior"/>
    <property type="evidence" value="ECO:0000315"/>
    <property type="project" value="FlyBase"/>
</dbReference>
<dbReference type="GO" id="GO:0050829">
    <property type="term" value="P:defense response to Gram-negative bacterium"/>
    <property type="evidence" value="ECO:0000315"/>
    <property type="project" value="FlyBase"/>
</dbReference>
<dbReference type="CDD" id="cd11056">
    <property type="entry name" value="CYP6-like"/>
    <property type="match status" value="1"/>
</dbReference>
<dbReference type="FunFam" id="1.10.630.10:FF:000042">
    <property type="entry name" value="Cytochrome P450"/>
    <property type="match status" value="1"/>
</dbReference>
<dbReference type="Gene3D" id="1.10.630.10">
    <property type="entry name" value="Cytochrome P450"/>
    <property type="match status" value="1"/>
</dbReference>
<dbReference type="InterPro" id="IPR001128">
    <property type="entry name" value="Cyt_P450"/>
</dbReference>
<dbReference type="InterPro" id="IPR017972">
    <property type="entry name" value="Cyt_P450_CS"/>
</dbReference>
<dbReference type="InterPro" id="IPR002401">
    <property type="entry name" value="Cyt_P450_E_grp-I"/>
</dbReference>
<dbReference type="InterPro" id="IPR036396">
    <property type="entry name" value="Cyt_P450_sf"/>
</dbReference>
<dbReference type="InterPro" id="IPR050476">
    <property type="entry name" value="Insect_CytP450_Detox"/>
</dbReference>
<dbReference type="PANTHER" id="PTHR24292">
    <property type="entry name" value="CYTOCHROME P450"/>
    <property type="match status" value="1"/>
</dbReference>
<dbReference type="PANTHER" id="PTHR24292:SF100">
    <property type="entry name" value="CYTOCHROME P450 6A16, ISOFORM B-RELATED"/>
    <property type="match status" value="1"/>
</dbReference>
<dbReference type="Pfam" id="PF00067">
    <property type="entry name" value="p450"/>
    <property type="match status" value="1"/>
</dbReference>
<dbReference type="PRINTS" id="PR00463">
    <property type="entry name" value="EP450I"/>
</dbReference>
<dbReference type="PRINTS" id="PR00385">
    <property type="entry name" value="P450"/>
</dbReference>
<dbReference type="SUPFAM" id="SSF48264">
    <property type="entry name" value="Cytochrome P450"/>
    <property type="match status" value="1"/>
</dbReference>
<dbReference type="PROSITE" id="PS00086">
    <property type="entry name" value="CYTOCHROME_P450"/>
    <property type="match status" value="1"/>
</dbReference>